<protein>
    <recommendedName>
        <fullName evidence="1">Probable phosphatase YcdX</fullName>
        <ecNumber evidence="1">3.1.3.-</ecNumber>
    </recommendedName>
</protein>
<reference key="1">
    <citation type="journal article" date="2008" name="J. Bacteriol.">
        <title>The pangenome structure of Escherichia coli: comparative genomic analysis of E. coli commensal and pathogenic isolates.</title>
        <authorList>
            <person name="Rasko D.A."/>
            <person name="Rosovitz M.J."/>
            <person name="Myers G.S.A."/>
            <person name="Mongodin E.F."/>
            <person name="Fricke W.F."/>
            <person name="Gajer P."/>
            <person name="Crabtree J."/>
            <person name="Sebaihia M."/>
            <person name="Thomson N.R."/>
            <person name="Chaudhuri R."/>
            <person name="Henderson I.R."/>
            <person name="Sperandio V."/>
            <person name="Ravel J."/>
        </authorList>
    </citation>
    <scope>NUCLEOTIDE SEQUENCE [LARGE SCALE GENOMIC DNA]</scope>
    <source>
        <strain>E24377A / ETEC</strain>
    </source>
</reference>
<sequence length="245" mass="26802">MYPVDLHMHTVASTHAYSTLSDYIAQAKQKGIKLFAITDHGPDMEDAPHHWHFINMRIWPRVVDGVGILRGIEANIKNVDGEIDCSGKMFDSLDLIIAGFHEPVFAPHDKATNTQAMIATIASGNVHIISHPGNPKYEIDVKAVAEAAAKHQVALEINNSSFLHSRKGSEDNCRAVAAAVRDAGGWVALGSDSHAAFTMGEFEECLKILDAVDFPPERILNVSPRRLLNFLESRGMAPIAEFADL</sequence>
<keyword id="KW-0378">Hydrolase</keyword>
<keyword id="KW-0479">Metal-binding</keyword>
<keyword id="KW-1185">Reference proteome</keyword>
<keyword id="KW-0862">Zinc</keyword>
<name>YCDX_ECO24</name>
<dbReference type="EC" id="3.1.3.-" evidence="1"/>
<dbReference type="EMBL" id="CP000800">
    <property type="protein sequence ID" value="ABV16698.1"/>
    <property type="molecule type" value="Genomic_DNA"/>
</dbReference>
<dbReference type="RefSeq" id="WP_000283662.1">
    <property type="nucleotide sequence ID" value="NC_009801.1"/>
</dbReference>
<dbReference type="SMR" id="A7ZKD6"/>
<dbReference type="KEGG" id="ecw:EcE24377A_1153"/>
<dbReference type="HOGENOM" id="CLU_061999_0_1_6"/>
<dbReference type="Proteomes" id="UP000001122">
    <property type="component" value="Chromosome"/>
</dbReference>
<dbReference type="GO" id="GO:0005829">
    <property type="term" value="C:cytosol"/>
    <property type="evidence" value="ECO:0007669"/>
    <property type="project" value="TreeGrafter"/>
</dbReference>
<dbReference type="GO" id="GO:0016791">
    <property type="term" value="F:phosphatase activity"/>
    <property type="evidence" value="ECO:0007669"/>
    <property type="project" value="UniProtKB-UniRule"/>
</dbReference>
<dbReference type="GO" id="GO:0008270">
    <property type="term" value="F:zinc ion binding"/>
    <property type="evidence" value="ECO:0007669"/>
    <property type="project" value="UniProtKB-UniRule"/>
</dbReference>
<dbReference type="GO" id="GO:0071978">
    <property type="term" value="P:bacterial-type flagellum-dependent swarming motility"/>
    <property type="evidence" value="ECO:0007669"/>
    <property type="project" value="TreeGrafter"/>
</dbReference>
<dbReference type="CDD" id="cd07437">
    <property type="entry name" value="PHP_HisPPase_Ycdx_like"/>
    <property type="match status" value="1"/>
</dbReference>
<dbReference type="FunFam" id="3.20.20.140:FF:000008">
    <property type="entry name" value="Probable phosphatase YcdX"/>
    <property type="match status" value="1"/>
</dbReference>
<dbReference type="Gene3D" id="3.20.20.140">
    <property type="entry name" value="Metal-dependent hydrolases"/>
    <property type="match status" value="1"/>
</dbReference>
<dbReference type="HAMAP" id="MF_01561">
    <property type="entry name" value="YcdX_phosphat"/>
    <property type="match status" value="1"/>
</dbReference>
<dbReference type="InterPro" id="IPR023710">
    <property type="entry name" value="Phosphatase_YcdX_put"/>
</dbReference>
<dbReference type="InterPro" id="IPR004013">
    <property type="entry name" value="PHP_dom"/>
</dbReference>
<dbReference type="InterPro" id="IPR050243">
    <property type="entry name" value="PHP_phosphatase"/>
</dbReference>
<dbReference type="InterPro" id="IPR003141">
    <property type="entry name" value="Pol/His_phosphatase_N"/>
</dbReference>
<dbReference type="InterPro" id="IPR016195">
    <property type="entry name" value="Pol/histidinol_Pase-like"/>
</dbReference>
<dbReference type="NCBIfam" id="NF006702">
    <property type="entry name" value="PRK09248.1"/>
    <property type="match status" value="1"/>
</dbReference>
<dbReference type="PANTHER" id="PTHR36928">
    <property type="entry name" value="PHOSPHATASE YCDX-RELATED"/>
    <property type="match status" value="1"/>
</dbReference>
<dbReference type="PANTHER" id="PTHR36928:SF1">
    <property type="entry name" value="PHOSPHATASE YCDX-RELATED"/>
    <property type="match status" value="1"/>
</dbReference>
<dbReference type="Pfam" id="PF02811">
    <property type="entry name" value="PHP"/>
    <property type="match status" value="1"/>
</dbReference>
<dbReference type="SMART" id="SM00481">
    <property type="entry name" value="POLIIIAc"/>
    <property type="match status" value="1"/>
</dbReference>
<dbReference type="SUPFAM" id="SSF89550">
    <property type="entry name" value="PHP domain-like"/>
    <property type="match status" value="1"/>
</dbReference>
<proteinExistence type="inferred from homology"/>
<organism>
    <name type="scientific">Escherichia coli O139:H28 (strain E24377A / ETEC)</name>
    <dbReference type="NCBI Taxonomy" id="331111"/>
    <lineage>
        <taxon>Bacteria</taxon>
        <taxon>Pseudomonadati</taxon>
        <taxon>Pseudomonadota</taxon>
        <taxon>Gammaproteobacteria</taxon>
        <taxon>Enterobacterales</taxon>
        <taxon>Enterobacteriaceae</taxon>
        <taxon>Escherichia</taxon>
    </lineage>
</organism>
<gene>
    <name evidence="1" type="primary">ycdX</name>
    <name type="ordered locus">EcE24377A_1153</name>
</gene>
<evidence type="ECO:0000255" key="1">
    <source>
        <dbReference type="HAMAP-Rule" id="MF_01561"/>
    </source>
</evidence>
<comment type="cofactor">
    <cofactor evidence="1">
        <name>Zn(2+)</name>
        <dbReference type="ChEBI" id="CHEBI:29105"/>
    </cofactor>
    <text evidence="1">Binds 3 Zn(2+) ions per subunit.</text>
</comment>
<comment type="subunit">
    <text evidence="1">Homotrimer.</text>
</comment>
<comment type="similarity">
    <text evidence="1">Belongs to the PHP family.</text>
</comment>
<feature type="chain" id="PRO_1000069016" description="Probable phosphatase YcdX">
    <location>
        <begin position="1"/>
        <end position="245"/>
    </location>
</feature>
<feature type="binding site" evidence="1">
    <location>
        <position position="7"/>
    </location>
    <ligand>
        <name>Zn(2+)</name>
        <dbReference type="ChEBI" id="CHEBI:29105"/>
        <label>1</label>
    </ligand>
</feature>
<feature type="binding site" evidence="1">
    <location>
        <position position="9"/>
    </location>
    <ligand>
        <name>Zn(2+)</name>
        <dbReference type="ChEBI" id="CHEBI:29105"/>
        <label>1</label>
    </ligand>
</feature>
<feature type="binding site" evidence="1">
    <location>
        <position position="15"/>
    </location>
    <ligand>
        <name>Zn(2+)</name>
        <dbReference type="ChEBI" id="CHEBI:29105"/>
        <label>2</label>
    </ligand>
</feature>
<feature type="binding site" evidence="1">
    <location>
        <position position="40"/>
    </location>
    <ligand>
        <name>Zn(2+)</name>
        <dbReference type="ChEBI" id="CHEBI:29105"/>
        <label>2</label>
    </ligand>
</feature>
<feature type="binding site" evidence="1">
    <location>
        <position position="73"/>
    </location>
    <ligand>
        <name>Zn(2+)</name>
        <dbReference type="ChEBI" id="CHEBI:29105"/>
        <label>1</label>
    </ligand>
</feature>
<feature type="binding site" evidence="1">
    <location>
        <position position="73"/>
    </location>
    <ligand>
        <name>Zn(2+)</name>
        <dbReference type="ChEBI" id="CHEBI:29105"/>
        <label>3</label>
    </ligand>
</feature>
<feature type="binding site" evidence="1">
    <location>
        <position position="101"/>
    </location>
    <ligand>
        <name>Zn(2+)</name>
        <dbReference type="ChEBI" id="CHEBI:29105"/>
        <label>3</label>
    </ligand>
</feature>
<feature type="binding site" evidence="1">
    <location>
        <position position="131"/>
    </location>
    <ligand>
        <name>Zn(2+)</name>
        <dbReference type="ChEBI" id="CHEBI:29105"/>
        <label>3</label>
    </ligand>
</feature>
<feature type="binding site" evidence="1">
    <location>
        <position position="192"/>
    </location>
    <ligand>
        <name>Zn(2+)</name>
        <dbReference type="ChEBI" id="CHEBI:29105"/>
        <label>1</label>
    </ligand>
</feature>
<feature type="binding site" evidence="1">
    <location>
        <position position="194"/>
    </location>
    <ligand>
        <name>Zn(2+)</name>
        <dbReference type="ChEBI" id="CHEBI:29105"/>
        <label>2</label>
    </ligand>
</feature>
<accession>A7ZKD6</accession>